<keyword id="KW-0002">3D-structure</keyword>
<keyword id="KW-0058">Aromatic hydrocarbons catabolism</keyword>
<keyword id="KW-0997">Cell inner membrane</keyword>
<keyword id="KW-1003">Cell membrane</keyword>
<keyword id="KW-0903">Direct protein sequencing</keyword>
<keyword id="KW-0285">Flavoprotein</keyword>
<keyword id="KW-0288">FMN</keyword>
<keyword id="KW-0463">Mandelate pathway</keyword>
<keyword id="KW-0472">Membrane</keyword>
<keyword id="KW-0560">Oxidoreductase</keyword>
<sequence>MSQNLFNVEDYRKLRQKRLPKMVYDYLEGGAEDEYGVKHNRDVFQQWRFKPKRLVDVSRRSLQAEVLGKRQSMPLLIGPTGLNGALWPKGDLALARAATKAGIPFVLSTASNMSIEDLARQCDGDLWFQLYVIHREIAQGMVLKALHTGYTTLVLTTDVAVNGYRERDLHNRFKIPMSYSAKVVLDGCLHPRWSLDFVRHGMPQLANFVSSQTSSLEMQAALMSRQMDASFNWEALRWLRDLWPHKLLVKGLLSAEDADRCIAEGADGVILSNHGGRQLDCAISPMEVLAQSVAKTGKPVLIDSGFRRGSDIVKALALGAEAVLLGRATLYGLAARGETGVDEVLTLLKADIDRTLAQIGCPDITSLSPDYLQNEGVTNTAPVDHLIGKGTHA</sequence>
<reference key="1">
    <citation type="journal article" date="1990" name="Biochemistry">
        <title>Mandelate pathway of Pseudomonas putida: sequence relationships involving mandelate racemase, (S)-mandelate dehydrogenase, and benzoylformate decarboxylase and expression of benzoylformate decarboxylase in Escherichia coli.</title>
        <authorList>
            <person name="Tsou A.Y."/>
            <person name="Ransom S.C."/>
            <person name="Gerlt J.A."/>
            <person name="Buechter D.D."/>
            <person name="Babbitt P.C."/>
            <person name="Kenyon G.L."/>
        </authorList>
    </citation>
    <scope>NUCLEOTIDE SEQUENCE [GENOMIC DNA]</scope>
    <scope>PROTEIN SEQUENCE OF 1-30</scope>
    <scope>FUNCTION</scope>
    <scope>PATHWAY</scope>
    <source>
        <strain>ATCC 12633 / DSM 291 / JCM 13063 / CCUG 12690 / LMG 2257 / NBRC 14164 / NCIMB 9494 / NCTC 10936 / VKM B-2187 / Stanier 90</strain>
    </source>
</reference>
<reference key="2">
    <citation type="journal article" date="1999" name="Biochemistry">
        <title>A highly active, soluble mutant of the membrane-associated (S)-mandelate dehydrogenase from Pseudomonas putida.</title>
        <authorList>
            <person name="Xu Y."/>
            <person name="Mitra B."/>
        </authorList>
    </citation>
    <scope>FUNCTION</scope>
    <scope>CATALYTIC ACTIVITY</scope>
    <scope>BIOPHYSICOCHEMICAL PROPERTIES</scope>
    <scope>COFACTOR</scope>
    <scope>SUBSTRATE SPECIFICITY</scope>
    <scope>SUBCELLULAR LOCATION</scope>
    <source>
        <strain>ATCC 12633 / DSM 291 / JCM 13063 / CCUG 12690 / LMG 2257 / NBRC 14164 / NCIMB 9494 / NCTC 10936 / VKM B-2187 / Stanier 90</strain>
    </source>
</reference>
<reference evidence="15" key="3">
    <citation type="journal article" date="2001" name="Biochemistry">
        <title>Structure of an active soluble mutant of the membrane-associated (S)-mandelate dehydrogenase.</title>
        <authorList>
            <person name="Sukumar N."/>
            <person name="Xu Y."/>
            <person name="Gatti D.L."/>
            <person name="Mitra B."/>
            <person name="Mathews F.S."/>
        </authorList>
    </citation>
    <scope>X-RAY CRYSTALLOGRAPHY (2.15 ANGSTROMS) OF A CHIMERIC MUTANT IN COMPLEX WITH FMN</scope>
    <scope>COFACTOR</scope>
    <scope>SUBUNIT</scope>
</reference>
<reference evidence="16 17" key="4">
    <citation type="journal article" date="2004" name="J. Biol. Chem.">
        <title>High resolution structures of an oxidized and reduced flavoprotein. The water switch in a soluble form of (S)-mandelate dehydrogenase.</title>
        <authorList>
            <person name="Sukumar N."/>
            <person name="Dewanti A.R."/>
            <person name="Mitra B."/>
            <person name="Mathews F.S."/>
        </authorList>
    </citation>
    <scope>X-RAY CRYSTALLOGRAPHY (1.35 ANGSTROMS) OF A CHIMERIC MUTANT IN COMPLEX WITH FMN</scope>
    <scope>COFACTOR</scope>
    <scope>SUBUNIT</scope>
</reference>
<reference evidence="18 19 20" key="5">
    <citation type="journal article" date="2009" name="Acta Crystallogr. D">
        <title>Structures of the G81A mutant form of the active chimera of (S)-mandelate dehydrogenase and its complex with two of its substrates.</title>
        <authorList>
            <person name="Sukumar N."/>
            <person name="Dewanti A."/>
            <person name="Merli A."/>
            <person name="Rossi G.L."/>
            <person name="Mitra B."/>
            <person name="Mathews F.S."/>
        </authorList>
    </citation>
    <scope>X-RAY CRYSTALLOGRAPHY (1.60 ANGSTROMS) OF MUTANT ALA-81 OF A CHIMERIC MUTANT IN COMPLEXES WITH (2S)-2-HYDROXYOCTANOATE; 3-INDOLELACTATE AND FMN</scope>
    <scope>FUNCTION</scope>
    <scope>CATALYTIC ACTIVITY</scope>
    <scope>BIOPHYSICOCHEMICAL PROPERTIES</scope>
    <scope>COFACTOR</scope>
    <scope>MUTAGENESIS OF GLY-81</scope>
</reference>
<reference evidence="21" key="6">
    <citation type="journal article" date="2018" name="Biochimie">
        <title>Structure of the monotopic membrane protein (S)-mandelate dehydrogenase at 2.2A resolution.</title>
        <authorList>
            <person name="Sukumar N."/>
            <person name="Liu S."/>
            <person name="Li W."/>
            <person name="Mathews F.S."/>
            <person name="Mitra B."/>
            <person name="Kandavelu P."/>
        </authorList>
    </citation>
    <scope>X-RAY CRYSTALLOGRAPHY (2.20 ANGSTROMS) IN COMPLEX WITH FMN</scope>
    <scope>COFACTOR</scope>
</reference>
<organism>
    <name type="scientific">Pseudomonas putida</name>
    <name type="common">Arthrobacter siderocapsulatus</name>
    <dbReference type="NCBI Taxonomy" id="303"/>
    <lineage>
        <taxon>Bacteria</taxon>
        <taxon>Pseudomonadati</taxon>
        <taxon>Pseudomonadota</taxon>
        <taxon>Gammaproteobacteria</taxon>
        <taxon>Pseudomonadales</taxon>
        <taxon>Pseudomonadaceae</taxon>
        <taxon>Pseudomonas</taxon>
    </lineage>
</organism>
<evidence type="ECO:0000255" key="1">
    <source>
        <dbReference type="PROSITE-ProRule" id="PRU00683"/>
    </source>
</evidence>
<evidence type="ECO:0000269" key="2">
    <source>
    </source>
</evidence>
<evidence type="ECO:0000269" key="3">
    <source>
    </source>
</evidence>
<evidence type="ECO:0000269" key="4">
    <source>
    </source>
</evidence>
<evidence type="ECO:0000269" key="5">
    <source>
    </source>
</evidence>
<evidence type="ECO:0000269" key="6">
    <source>
    </source>
</evidence>
<evidence type="ECO:0000303" key="7">
    <source>
    </source>
</evidence>
<evidence type="ECO:0000303" key="8">
    <source>
    </source>
</evidence>
<evidence type="ECO:0000303" key="9">
    <source>
    </source>
</evidence>
<evidence type="ECO:0000305" key="10">
    <source>
    </source>
</evidence>
<evidence type="ECO:0000305" key="11">
    <source>
    </source>
</evidence>
<evidence type="ECO:0000305" key="12">
    <source>
    </source>
</evidence>
<evidence type="ECO:0000305" key="13">
    <source>
    </source>
</evidence>
<evidence type="ECO:0000305" key="14">
    <source>
    </source>
</evidence>
<evidence type="ECO:0007744" key="15">
    <source>
        <dbReference type="PDB" id="1HUV"/>
    </source>
</evidence>
<evidence type="ECO:0007744" key="16">
    <source>
        <dbReference type="PDB" id="1P4C"/>
    </source>
</evidence>
<evidence type="ECO:0007744" key="17">
    <source>
        <dbReference type="PDB" id="1P5B"/>
    </source>
</evidence>
<evidence type="ECO:0007744" key="18">
    <source>
        <dbReference type="PDB" id="2A7P"/>
    </source>
</evidence>
<evidence type="ECO:0007744" key="19">
    <source>
        <dbReference type="PDB" id="2A85"/>
    </source>
</evidence>
<evidence type="ECO:0007744" key="20">
    <source>
        <dbReference type="PDB" id="3GIY"/>
    </source>
</evidence>
<evidence type="ECO:0007744" key="21">
    <source>
        <dbReference type="PDB" id="6BFG"/>
    </source>
</evidence>
<evidence type="ECO:0007829" key="22">
    <source>
        <dbReference type="PDB" id="1P4C"/>
    </source>
</evidence>
<evidence type="ECO:0007829" key="23">
    <source>
        <dbReference type="PDB" id="6BFG"/>
    </source>
</evidence>
<feature type="chain" id="PRO_0000206327" description="(S)-mandelate dehydrogenase">
    <location>
        <begin position="1"/>
        <end position="393"/>
    </location>
</feature>
<feature type="domain" description="FMN hydroxy acid dehydrogenase" evidence="1">
    <location>
        <begin position="1"/>
        <end position="377"/>
    </location>
</feature>
<feature type="active site" description="Proton acceptor" evidence="1">
    <location>
        <position position="274"/>
    </location>
</feature>
<feature type="binding site" evidence="13 19">
    <location>
        <position position="26"/>
    </location>
    <ligand>
        <name>(S)-mandelate</name>
        <dbReference type="ChEBI" id="CHEBI:17756"/>
    </ligand>
</feature>
<feature type="binding site" evidence="4 6 16 21">
    <location>
        <begin position="79"/>
        <end position="81"/>
    </location>
    <ligand>
        <name>FMN</name>
        <dbReference type="ChEBI" id="CHEBI:58210"/>
    </ligand>
</feature>
<feature type="binding site" evidence="4 6 16 21">
    <location>
        <position position="108"/>
    </location>
    <ligand>
        <name>FMN</name>
        <dbReference type="ChEBI" id="CHEBI:58210"/>
    </ligand>
</feature>
<feature type="binding site" evidence="4 6 16 21">
    <location>
        <position position="129"/>
    </location>
    <ligand>
        <name>FMN</name>
        <dbReference type="ChEBI" id="CHEBI:58210"/>
    </ligand>
</feature>
<feature type="binding site" evidence="13 19">
    <location>
        <position position="131"/>
    </location>
    <ligand>
        <name>(S)-mandelate</name>
        <dbReference type="ChEBI" id="CHEBI:17756"/>
    </ligand>
</feature>
<feature type="binding site" evidence="4 6 16 21">
    <location>
        <position position="156"/>
    </location>
    <ligand>
        <name>FMN</name>
        <dbReference type="ChEBI" id="CHEBI:58210"/>
    </ligand>
</feature>
<feature type="binding site" evidence="13 19">
    <location>
        <position position="165"/>
    </location>
    <ligand>
        <name>(S)-mandelate</name>
        <dbReference type="ChEBI" id="CHEBI:17756"/>
    </ligand>
</feature>
<feature type="binding site" evidence="4 6 16 21">
    <location>
        <position position="250"/>
    </location>
    <ligand>
        <name>FMN</name>
        <dbReference type="ChEBI" id="CHEBI:58210"/>
    </ligand>
</feature>
<feature type="binding site" evidence="13 19">
    <location>
        <position position="274"/>
    </location>
    <ligand>
        <name>(S)-mandelate</name>
        <dbReference type="ChEBI" id="CHEBI:17756"/>
    </ligand>
</feature>
<feature type="binding site" evidence="13 19">
    <location>
        <position position="277"/>
    </location>
    <ligand>
        <name>(S)-mandelate</name>
        <dbReference type="ChEBI" id="CHEBI:17756"/>
    </ligand>
</feature>
<feature type="binding site" evidence="4 6 16 21">
    <location>
        <begin position="303"/>
        <end position="307"/>
    </location>
    <ligand>
        <name>FMN</name>
        <dbReference type="ChEBI" id="CHEBI:58210"/>
    </ligand>
</feature>
<feature type="binding site" evidence="4 6 16 21">
    <location>
        <begin position="326"/>
        <end position="327"/>
    </location>
    <ligand>
        <name>FMN</name>
        <dbReference type="ChEBI" id="CHEBI:58210"/>
    </ligand>
</feature>
<feature type="mutagenesis site" description="23-fold decrease in catalytic activity with mandelate as substrate and DCPIP as electron acceptor, but no change in affinity for mandelate. Shows a modestly higher reactivity with molecular oxygen." evidence="5">
    <original>G</original>
    <variation>A</variation>
    <location>
        <position position="81"/>
    </location>
</feature>
<feature type="helix" evidence="22">
    <location>
        <begin position="8"/>
        <end position="14"/>
    </location>
</feature>
<feature type="helix" evidence="22">
    <location>
        <begin position="16"/>
        <end position="18"/>
    </location>
</feature>
<feature type="helix" evidence="22">
    <location>
        <begin position="21"/>
        <end position="28"/>
    </location>
</feature>
<feature type="helix" evidence="22">
    <location>
        <begin position="35"/>
        <end position="42"/>
    </location>
</feature>
<feature type="helix" evidence="22">
    <location>
        <begin position="43"/>
        <end position="46"/>
    </location>
</feature>
<feature type="strand" evidence="22">
    <location>
        <begin position="47"/>
        <end position="49"/>
    </location>
</feature>
<feature type="strand" evidence="22">
    <location>
        <begin position="64"/>
        <end position="66"/>
    </location>
</feature>
<feature type="strand" evidence="22">
    <location>
        <begin position="69"/>
        <end position="77"/>
    </location>
</feature>
<feature type="helix" evidence="22">
    <location>
        <begin position="83"/>
        <end position="85"/>
    </location>
</feature>
<feature type="helix" evidence="22">
    <location>
        <begin position="90"/>
        <end position="101"/>
    </location>
</feature>
<feature type="strand" evidence="22">
    <location>
        <begin position="105"/>
        <end position="107"/>
    </location>
</feature>
<feature type="helix" evidence="22">
    <location>
        <begin position="115"/>
        <end position="121"/>
    </location>
</feature>
<feature type="strand" evidence="22">
    <location>
        <begin position="126"/>
        <end position="130"/>
    </location>
</feature>
<feature type="helix" evidence="22">
    <location>
        <begin position="135"/>
        <end position="147"/>
    </location>
</feature>
<feature type="strand" evidence="22">
    <location>
        <begin position="152"/>
        <end position="156"/>
    </location>
</feature>
<feature type="helix" evidence="22">
    <location>
        <begin position="166"/>
        <end position="171"/>
    </location>
</feature>
<feature type="helix" evidence="23">
    <location>
        <begin position="181"/>
        <end position="188"/>
    </location>
</feature>
<feature type="helix" evidence="23">
    <location>
        <begin position="191"/>
        <end position="200"/>
    </location>
</feature>
<feature type="helix" evidence="23">
    <location>
        <begin position="206"/>
        <end position="208"/>
    </location>
</feature>
<feature type="strand" evidence="23">
    <location>
        <begin position="210"/>
        <end position="213"/>
    </location>
</feature>
<feature type="turn" evidence="22">
    <location>
        <begin position="216"/>
        <end position="218"/>
    </location>
</feature>
<feature type="helix" evidence="22">
    <location>
        <begin position="219"/>
        <end position="222"/>
    </location>
</feature>
<feature type="helix" evidence="22">
    <location>
        <begin position="233"/>
        <end position="242"/>
    </location>
</feature>
<feature type="strand" evidence="22">
    <location>
        <begin position="245"/>
        <end position="252"/>
    </location>
</feature>
<feature type="helix" evidence="22">
    <location>
        <begin position="255"/>
        <end position="263"/>
    </location>
</feature>
<feature type="strand" evidence="22">
    <location>
        <begin position="267"/>
        <end position="271"/>
    </location>
</feature>
<feature type="helix" evidence="22">
    <location>
        <begin position="274"/>
        <end position="276"/>
    </location>
</feature>
<feature type="helix" evidence="22">
    <location>
        <begin position="285"/>
        <end position="287"/>
    </location>
</feature>
<feature type="helix" evidence="22">
    <location>
        <begin position="289"/>
        <end position="296"/>
    </location>
</feature>
<feature type="strand" evidence="22">
    <location>
        <begin position="300"/>
        <end position="302"/>
    </location>
</feature>
<feature type="helix" evidence="22">
    <location>
        <begin position="309"/>
        <end position="317"/>
    </location>
</feature>
<feature type="strand" evidence="22">
    <location>
        <begin position="323"/>
        <end position="326"/>
    </location>
</feature>
<feature type="helix" evidence="22">
    <location>
        <begin position="327"/>
        <end position="359"/>
    </location>
</feature>
<feature type="helix" evidence="22">
    <location>
        <begin position="364"/>
        <end position="366"/>
    </location>
</feature>
<feature type="helix" evidence="22">
    <location>
        <begin position="369"/>
        <end position="371"/>
    </location>
</feature>
<feature type="strand" evidence="22">
    <location>
        <begin position="372"/>
        <end position="374"/>
    </location>
</feature>
<dbReference type="EC" id="1.1.99.31"/>
<dbReference type="EMBL" id="AY143338">
    <property type="protein sequence ID" value="AAC15503.1"/>
    <property type="molecule type" value="Genomic_DNA"/>
</dbReference>
<dbReference type="PIR" id="B44767">
    <property type="entry name" value="B44767"/>
</dbReference>
<dbReference type="PDB" id="1HUV">
    <property type="method" value="X-ray"/>
    <property type="resolution" value="2.15 A"/>
    <property type="chains" value="A=1-176, A=216-393"/>
</dbReference>
<dbReference type="PDB" id="1P4C">
    <property type="method" value="X-ray"/>
    <property type="resolution" value="1.35 A"/>
    <property type="chains" value="A=1-176, A=216-393"/>
</dbReference>
<dbReference type="PDB" id="1P5B">
    <property type="method" value="X-ray"/>
    <property type="resolution" value="1.35 A"/>
    <property type="chains" value="A=1-176, A=216-393"/>
</dbReference>
<dbReference type="PDB" id="2A7N">
    <property type="method" value="X-ray"/>
    <property type="resolution" value="1.80 A"/>
    <property type="chains" value="A=1-176, A=216-393"/>
</dbReference>
<dbReference type="PDB" id="2A7P">
    <property type="method" value="X-ray"/>
    <property type="resolution" value="2.20 A"/>
    <property type="chains" value="A=1-176, A=216-393"/>
</dbReference>
<dbReference type="PDB" id="2A85">
    <property type="method" value="X-ray"/>
    <property type="resolution" value="2.50 A"/>
    <property type="chains" value="A=1-176, A=216-393"/>
</dbReference>
<dbReference type="PDB" id="3GIY">
    <property type="method" value="X-ray"/>
    <property type="resolution" value="1.60 A"/>
    <property type="chains" value="A=1-176, A=216-393"/>
</dbReference>
<dbReference type="PDB" id="6BFG">
    <property type="method" value="X-ray"/>
    <property type="resolution" value="2.20 A"/>
    <property type="chains" value="A/B=1-393"/>
</dbReference>
<dbReference type="PDBsum" id="1HUV"/>
<dbReference type="PDBsum" id="1P4C"/>
<dbReference type="PDBsum" id="1P5B"/>
<dbReference type="PDBsum" id="2A7N"/>
<dbReference type="PDBsum" id="2A7P"/>
<dbReference type="PDBsum" id="2A85"/>
<dbReference type="PDBsum" id="3GIY"/>
<dbReference type="PDBsum" id="6BFG"/>
<dbReference type="SMR" id="P20932"/>
<dbReference type="DrugBank" id="DB07907">
    <property type="generic name" value="(2S)-2-HYDROXYOCTANOIC ACID"/>
</dbReference>
<dbReference type="DrugBank" id="DB03814">
    <property type="generic name" value="2-(N-morpholino)ethanesulfonic acid"/>
</dbReference>
<dbReference type="DrugBank" id="DB07060">
    <property type="generic name" value="3-(INDOL-3-YL) LACTATE"/>
</dbReference>
<dbReference type="DrugBank" id="DB03247">
    <property type="generic name" value="Flavin mononucleotide"/>
</dbReference>
<dbReference type="BioCyc" id="MetaCyc:MONOMER-2422"/>
<dbReference type="BRENDA" id="1.1.99.31">
    <property type="organism ID" value="5092"/>
</dbReference>
<dbReference type="SABIO-RK" id="P20932"/>
<dbReference type="UniPathway" id="UPA00873">
    <property type="reaction ID" value="UER00853"/>
</dbReference>
<dbReference type="EvolutionaryTrace" id="P20932"/>
<dbReference type="GO" id="GO:0005886">
    <property type="term" value="C:plasma membrane"/>
    <property type="evidence" value="ECO:0007669"/>
    <property type="project" value="UniProtKB-SubCell"/>
</dbReference>
<dbReference type="GO" id="GO:0033720">
    <property type="term" value="F:(S)-mandelate dehydrogenase activity"/>
    <property type="evidence" value="ECO:0007669"/>
    <property type="project" value="UniProtKB-EC"/>
</dbReference>
<dbReference type="GO" id="GO:0010181">
    <property type="term" value="F:FMN binding"/>
    <property type="evidence" value="ECO:0007669"/>
    <property type="project" value="InterPro"/>
</dbReference>
<dbReference type="GO" id="GO:0004459">
    <property type="term" value="F:L-lactate dehydrogenase activity"/>
    <property type="evidence" value="ECO:0007669"/>
    <property type="project" value="TreeGrafter"/>
</dbReference>
<dbReference type="GO" id="GO:0009060">
    <property type="term" value="P:aerobic respiration"/>
    <property type="evidence" value="ECO:0007669"/>
    <property type="project" value="TreeGrafter"/>
</dbReference>
<dbReference type="GO" id="GO:0019596">
    <property type="term" value="P:mandelate catabolic process"/>
    <property type="evidence" value="ECO:0007669"/>
    <property type="project" value="UniProtKB-UniPathway"/>
</dbReference>
<dbReference type="CDD" id="cd04736">
    <property type="entry name" value="MDH_FMN"/>
    <property type="match status" value="1"/>
</dbReference>
<dbReference type="FunFam" id="3.20.20.70:FF:000029">
    <property type="entry name" value="L-lactate dehydrogenase"/>
    <property type="match status" value="1"/>
</dbReference>
<dbReference type="Gene3D" id="3.20.20.70">
    <property type="entry name" value="Aldolase class I"/>
    <property type="match status" value="1"/>
</dbReference>
<dbReference type="InterPro" id="IPR013785">
    <property type="entry name" value="Aldolase_TIM"/>
</dbReference>
<dbReference type="InterPro" id="IPR012133">
    <property type="entry name" value="Alpha-hydoxy_acid_DH_FMN"/>
</dbReference>
<dbReference type="InterPro" id="IPR000262">
    <property type="entry name" value="FMN-dep_DH"/>
</dbReference>
<dbReference type="InterPro" id="IPR037396">
    <property type="entry name" value="FMN_HAD"/>
</dbReference>
<dbReference type="InterPro" id="IPR008259">
    <property type="entry name" value="FMN_hydac_DH_AS"/>
</dbReference>
<dbReference type="PANTHER" id="PTHR10578:SF107">
    <property type="entry name" value="2-HYDROXYACID OXIDASE 1"/>
    <property type="match status" value="1"/>
</dbReference>
<dbReference type="PANTHER" id="PTHR10578">
    <property type="entry name" value="S -2-HYDROXY-ACID OXIDASE-RELATED"/>
    <property type="match status" value="1"/>
</dbReference>
<dbReference type="Pfam" id="PF01070">
    <property type="entry name" value="FMN_dh"/>
    <property type="match status" value="1"/>
</dbReference>
<dbReference type="PIRSF" id="PIRSF000138">
    <property type="entry name" value="Al-hdrx_acd_dh"/>
    <property type="match status" value="1"/>
</dbReference>
<dbReference type="SUPFAM" id="SSF51395">
    <property type="entry name" value="FMN-linked oxidoreductases"/>
    <property type="match status" value="1"/>
</dbReference>
<dbReference type="PROSITE" id="PS00557">
    <property type="entry name" value="FMN_HYDROXY_ACID_DH_1"/>
    <property type="match status" value="1"/>
</dbReference>
<dbReference type="PROSITE" id="PS51349">
    <property type="entry name" value="FMN_HYDROXY_ACID_DH_2"/>
    <property type="match status" value="1"/>
</dbReference>
<proteinExistence type="evidence at protein level"/>
<comment type="function">
    <text evidence="2 5 14">Catalyzes the dehydrogenation of (S)-mandelate to phenylglyoxylate (benzoylformate) (PubMed:10493804, PubMed:19465768). Is likely involved in the utilization of mandelate as a sole source of carbon and energy for growth (Probable). Active in vitro with the artificial electron acceptors 2,6-dichlorophenolindophenol (DCPIP) or ferricyanide, but in vivo most likely transfer the electron pair from the reduced flavin to a component of the electron transport chain in the membrane, possibly a quinone (PubMed:10493804, PubMed:19465768). Shows very low activity with oxygen as the electron acceptor, and also with 3-indolelactate and medium chain 2-hydroxyacids as substrates (PubMed:10493804, PubMed:19465768).</text>
</comment>
<comment type="catalytic activity">
    <reaction evidence="2 5">
        <text>(S)-mandelate + A = phenylglyoxylate + AH2</text>
        <dbReference type="Rhea" id="RHEA:15749"/>
        <dbReference type="ChEBI" id="CHEBI:13193"/>
        <dbReference type="ChEBI" id="CHEBI:17499"/>
        <dbReference type="ChEBI" id="CHEBI:17756"/>
        <dbReference type="ChEBI" id="CHEBI:36656"/>
        <dbReference type="EC" id="1.1.99.31"/>
    </reaction>
    <physiologicalReaction direction="left-to-right" evidence="10">
        <dbReference type="Rhea" id="RHEA:15750"/>
    </physiologicalReaction>
</comment>
<comment type="cofactor">
    <cofactor evidence="2 3 4 5 6">
        <name>FMN</name>
        <dbReference type="ChEBI" id="CHEBI:58210"/>
    </cofactor>
</comment>
<comment type="biophysicochemical properties">
    <kinetics>
        <KM evidence="2">160 uM for (S)-mandelate (at pH 7.5 and 20 degrees Celsius)</KM>
        <KM evidence="2">750 uM for 2-hydroxyoctanoate (at pH 7.5 and 20 degrees Celsius)</KM>
        <KM evidence="2">4900 uM for 2-hydroxyhexanoate (at pH 7.5 and 20 degrees Celsius)</KM>
        <KM evidence="2">32000 uM for 2-hydroxybutanoate (at pH 7.5 and 20 degrees Celsius)</KM>
        <KM evidence="2 5">900 uM for 3-indolelactate (at pH 7.5 and 20 degrees Celsius)</KM>
        <KM evidence="5">240 uM for (RS)-mandelate (at pH 7.5 and 20 degrees Celsius)</KM>
        <KM evidence="5">800 uM for 2-hydroxyoctanoate (at pH 7.5 and 20 degrees Celsius)</KM>
        <text evidence="2 5">kcat is 290 sec(-1) with (S)-mandelate as substrate and DCPIP as electron acceptor (at pH 7.5 and 20 degrees Celsius) (PubMed:10493804). kcat is 0.5 sec(-1) with 2-hydroxyoctanoate as substrate and DCPIP as electron acceptor (at pH 7.5 and 20 degrees Celsius) (PubMed:10493804, PubMed:19465768). kcat is 0.34 sec(-1) with 2-hydroxyhexanoate as substrate and DCPIP as electron acceptor (at pH 7.5 and 20 degrees Celsius) (PubMed:10493804). kcat is 0.10 sec(-1) with 2-hydroxybutanoate as substrate and DCPIP as electron acceptor (at pH 7.5 and 20 degrees Celsius) (PubMed:10493804). kcat is 1.0 sec(-1) with 3-indolelactate as substrate and DCPIP as electron acceptor (at pH 7.5 and 20 degrees Celsius) (PubMed:10493804, PubMed:19465768). kcat is 350 sec(-1) with (RS)-mandelate as substrate and DCPIP as electron acceptor (at pH 7.5 and 20 degrees Celsius) (PubMed:19465768).</text>
    </kinetics>
</comment>
<comment type="pathway">
    <text evidence="14">Aromatic compound metabolism; (R)-mandelate degradation; benzoate from (R)-mandelate: step 2/4.</text>
</comment>
<comment type="subunit">
    <text evidence="11 12">Homotetramer.</text>
</comment>
<comment type="subcellular location">
    <subcellularLocation>
        <location evidence="2">Cell inner membrane</location>
    </subcellularLocation>
</comment>
<comment type="similarity">
    <text evidence="1">Belongs to the FMN-dependent alpha-hydroxy acid dehydrogenase family.</text>
</comment>
<accession>P20932</accession>
<protein>
    <recommendedName>
        <fullName evidence="7 8 9">(S)-mandelate dehydrogenase</fullName>
        <shortName evidence="7 9">MDH</shortName>
        <ecNumber>1.1.99.31</ecNumber>
    </recommendedName>
    <alternativeName>
        <fullName>L(+)-mandelate dehydrogenase</fullName>
    </alternativeName>
</protein>
<name>MDLB_PSEPU</name>
<gene>
    <name evidence="9" type="primary">mdlB</name>
</gene>